<name>SYFA_NITV4</name>
<feature type="chain" id="PRO_1000006824" description="Phenylalanine--tRNA ligase alpha subunit">
    <location>
        <begin position="1"/>
        <end position="345"/>
    </location>
</feature>
<feature type="binding site" evidence="1">
    <location>
        <position position="253"/>
    </location>
    <ligand>
        <name>Mg(2+)</name>
        <dbReference type="ChEBI" id="CHEBI:18420"/>
        <note>shared with beta subunit</note>
    </ligand>
</feature>
<evidence type="ECO:0000255" key="1">
    <source>
        <dbReference type="HAMAP-Rule" id="MF_00281"/>
    </source>
</evidence>
<proteinExistence type="inferred from homology"/>
<dbReference type="EC" id="6.1.1.20" evidence="1"/>
<dbReference type="EMBL" id="CP000527">
    <property type="protein sequence ID" value="ABM27734.1"/>
    <property type="molecule type" value="Genomic_DNA"/>
</dbReference>
<dbReference type="RefSeq" id="WP_010939804.1">
    <property type="nucleotide sequence ID" value="NC_008751.1"/>
</dbReference>
<dbReference type="SMR" id="A1VBB8"/>
<dbReference type="KEGG" id="dvl:Dvul_0711"/>
<dbReference type="HOGENOM" id="CLU_025086_0_1_7"/>
<dbReference type="Proteomes" id="UP000009173">
    <property type="component" value="Chromosome"/>
</dbReference>
<dbReference type="GO" id="GO:0005737">
    <property type="term" value="C:cytoplasm"/>
    <property type="evidence" value="ECO:0007669"/>
    <property type="project" value="UniProtKB-SubCell"/>
</dbReference>
<dbReference type="GO" id="GO:0005524">
    <property type="term" value="F:ATP binding"/>
    <property type="evidence" value="ECO:0007669"/>
    <property type="project" value="UniProtKB-UniRule"/>
</dbReference>
<dbReference type="GO" id="GO:0000287">
    <property type="term" value="F:magnesium ion binding"/>
    <property type="evidence" value="ECO:0007669"/>
    <property type="project" value="UniProtKB-UniRule"/>
</dbReference>
<dbReference type="GO" id="GO:0004826">
    <property type="term" value="F:phenylalanine-tRNA ligase activity"/>
    <property type="evidence" value="ECO:0007669"/>
    <property type="project" value="UniProtKB-UniRule"/>
</dbReference>
<dbReference type="GO" id="GO:0000049">
    <property type="term" value="F:tRNA binding"/>
    <property type="evidence" value="ECO:0007669"/>
    <property type="project" value="InterPro"/>
</dbReference>
<dbReference type="GO" id="GO:0006432">
    <property type="term" value="P:phenylalanyl-tRNA aminoacylation"/>
    <property type="evidence" value="ECO:0007669"/>
    <property type="project" value="UniProtKB-UniRule"/>
</dbReference>
<dbReference type="CDD" id="cd00496">
    <property type="entry name" value="PheRS_alpha_core"/>
    <property type="match status" value="1"/>
</dbReference>
<dbReference type="FunFam" id="3.30.930.10:FF:000003">
    <property type="entry name" value="Phenylalanine--tRNA ligase alpha subunit"/>
    <property type="match status" value="1"/>
</dbReference>
<dbReference type="Gene3D" id="3.30.930.10">
    <property type="entry name" value="Bira Bifunctional Protein, Domain 2"/>
    <property type="match status" value="1"/>
</dbReference>
<dbReference type="HAMAP" id="MF_00281">
    <property type="entry name" value="Phe_tRNA_synth_alpha1"/>
    <property type="match status" value="1"/>
</dbReference>
<dbReference type="InterPro" id="IPR006195">
    <property type="entry name" value="aa-tRNA-synth_II"/>
</dbReference>
<dbReference type="InterPro" id="IPR045864">
    <property type="entry name" value="aa-tRNA-synth_II/BPL/LPL"/>
</dbReference>
<dbReference type="InterPro" id="IPR004529">
    <property type="entry name" value="Phe-tRNA-synth_IIc_asu"/>
</dbReference>
<dbReference type="InterPro" id="IPR004188">
    <property type="entry name" value="Phe-tRNA_ligase_II_N"/>
</dbReference>
<dbReference type="InterPro" id="IPR022911">
    <property type="entry name" value="Phe_tRNA_ligase_alpha1_bac"/>
</dbReference>
<dbReference type="InterPro" id="IPR002319">
    <property type="entry name" value="Phenylalanyl-tRNA_Synthase"/>
</dbReference>
<dbReference type="InterPro" id="IPR010978">
    <property type="entry name" value="tRNA-bd_arm"/>
</dbReference>
<dbReference type="NCBIfam" id="TIGR00468">
    <property type="entry name" value="pheS"/>
    <property type="match status" value="1"/>
</dbReference>
<dbReference type="PANTHER" id="PTHR11538:SF41">
    <property type="entry name" value="PHENYLALANINE--TRNA LIGASE, MITOCHONDRIAL"/>
    <property type="match status" value="1"/>
</dbReference>
<dbReference type="PANTHER" id="PTHR11538">
    <property type="entry name" value="PHENYLALANYL-TRNA SYNTHETASE"/>
    <property type="match status" value="1"/>
</dbReference>
<dbReference type="Pfam" id="PF02912">
    <property type="entry name" value="Phe_tRNA-synt_N"/>
    <property type="match status" value="1"/>
</dbReference>
<dbReference type="Pfam" id="PF01409">
    <property type="entry name" value="tRNA-synt_2d"/>
    <property type="match status" value="1"/>
</dbReference>
<dbReference type="SUPFAM" id="SSF55681">
    <property type="entry name" value="Class II aaRS and biotin synthetases"/>
    <property type="match status" value="1"/>
</dbReference>
<dbReference type="SUPFAM" id="SSF46589">
    <property type="entry name" value="tRNA-binding arm"/>
    <property type="match status" value="1"/>
</dbReference>
<dbReference type="PROSITE" id="PS50862">
    <property type="entry name" value="AA_TRNA_LIGASE_II"/>
    <property type="match status" value="1"/>
</dbReference>
<gene>
    <name evidence="1" type="primary">pheS</name>
    <name type="ordered locus">Dvul_0711</name>
</gene>
<comment type="catalytic activity">
    <reaction evidence="1">
        <text>tRNA(Phe) + L-phenylalanine + ATP = L-phenylalanyl-tRNA(Phe) + AMP + diphosphate + H(+)</text>
        <dbReference type="Rhea" id="RHEA:19413"/>
        <dbReference type="Rhea" id="RHEA-COMP:9668"/>
        <dbReference type="Rhea" id="RHEA-COMP:9699"/>
        <dbReference type="ChEBI" id="CHEBI:15378"/>
        <dbReference type="ChEBI" id="CHEBI:30616"/>
        <dbReference type="ChEBI" id="CHEBI:33019"/>
        <dbReference type="ChEBI" id="CHEBI:58095"/>
        <dbReference type="ChEBI" id="CHEBI:78442"/>
        <dbReference type="ChEBI" id="CHEBI:78531"/>
        <dbReference type="ChEBI" id="CHEBI:456215"/>
        <dbReference type="EC" id="6.1.1.20"/>
    </reaction>
</comment>
<comment type="cofactor">
    <cofactor evidence="1">
        <name>Mg(2+)</name>
        <dbReference type="ChEBI" id="CHEBI:18420"/>
    </cofactor>
    <text evidence="1">Binds 2 magnesium ions per tetramer.</text>
</comment>
<comment type="subunit">
    <text evidence="1">Tetramer of two alpha and two beta subunits.</text>
</comment>
<comment type="subcellular location">
    <subcellularLocation>
        <location evidence="1">Cytoplasm</location>
    </subcellularLocation>
</comment>
<comment type="similarity">
    <text evidence="1">Belongs to the class-II aminoacyl-tRNA synthetase family. Phe-tRNA synthetase alpha subunit type 1 subfamily.</text>
</comment>
<organism>
    <name type="scientific">Nitratidesulfovibrio vulgaris (strain DP4)</name>
    <name type="common">Desulfovibrio vulgaris</name>
    <dbReference type="NCBI Taxonomy" id="391774"/>
    <lineage>
        <taxon>Bacteria</taxon>
        <taxon>Pseudomonadati</taxon>
        <taxon>Thermodesulfobacteriota</taxon>
        <taxon>Desulfovibrionia</taxon>
        <taxon>Desulfovibrionales</taxon>
        <taxon>Desulfovibrionaceae</taxon>
        <taxon>Nitratidesulfovibrio</taxon>
    </lineage>
</organism>
<sequence length="345" mass="38526">MDLLKELESLVPELERGLGQASSLQELEEQRIAFLGRKGRLAQVMAHLPELAPAERPRVGQAANTVKQALTELFEQRKVVLEQAKEAAALSRFDPSLPGRMPWRGSLHPVTLVMEEICSVFGALGYDIVTGPEVENDYHNFEALNMPPEHPARDMQDTLYITESILMRTHTSPLQVRTMKSLRPPVAAIAPGKVYRRDSDITHTPMFHQIEGFMVDHNVSMAELRGTLTSFLRTVFGGDTRVRFRPSFFPFTEPSAEVDISCCICGGKGHVGNEPCRVCKTTGWVEILGCGMIDPEVFKSVGYDPEVYTGFAFGLGVERVAMLKYGIGDLRMFFENDVRFLSQFA</sequence>
<reference key="1">
    <citation type="journal article" date="2009" name="Environ. Microbiol.">
        <title>Contribution of mobile genetic elements to Desulfovibrio vulgaris genome plasticity.</title>
        <authorList>
            <person name="Walker C.B."/>
            <person name="Stolyar S."/>
            <person name="Chivian D."/>
            <person name="Pinel N."/>
            <person name="Gabster J.A."/>
            <person name="Dehal P.S."/>
            <person name="He Z."/>
            <person name="Yang Z.K."/>
            <person name="Yen H.C."/>
            <person name="Zhou J."/>
            <person name="Wall J.D."/>
            <person name="Hazen T.C."/>
            <person name="Arkin A.P."/>
            <person name="Stahl D.A."/>
        </authorList>
    </citation>
    <scope>NUCLEOTIDE SEQUENCE [LARGE SCALE GENOMIC DNA]</scope>
    <source>
        <strain>DP4</strain>
    </source>
</reference>
<keyword id="KW-0030">Aminoacyl-tRNA synthetase</keyword>
<keyword id="KW-0067">ATP-binding</keyword>
<keyword id="KW-0963">Cytoplasm</keyword>
<keyword id="KW-0436">Ligase</keyword>
<keyword id="KW-0460">Magnesium</keyword>
<keyword id="KW-0479">Metal-binding</keyword>
<keyword id="KW-0547">Nucleotide-binding</keyword>
<keyword id="KW-0648">Protein biosynthesis</keyword>
<protein>
    <recommendedName>
        <fullName evidence="1">Phenylalanine--tRNA ligase alpha subunit</fullName>
        <ecNumber evidence="1">6.1.1.20</ecNumber>
    </recommendedName>
    <alternativeName>
        <fullName evidence="1">Phenylalanyl-tRNA synthetase alpha subunit</fullName>
        <shortName evidence="1">PheRS</shortName>
    </alternativeName>
</protein>
<accession>A1VBB8</accession>